<proteinExistence type="inferred from homology"/>
<reference key="1">
    <citation type="journal article" date="2004" name="Genome Res.">
        <title>The complete genome and proteome of Mycoplasma mobile.</title>
        <authorList>
            <person name="Jaffe J.D."/>
            <person name="Stange-Thomann N."/>
            <person name="Smith C."/>
            <person name="DeCaprio D."/>
            <person name="Fisher S."/>
            <person name="Butler J."/>
            <person name="Calvo S."/>
            <person name="Elkins T."/>
            <person name="FitzGerald M.G."/>
            <person name="Hafez N."/>
            <person name="Kodira C.D."/>
            <person name="Major J."/>
            <person name="Wang S."/>
            <person name="Wilkinson J."/>
            <person name="Nicol R."/>
            <person name="Nusbaum C."/>
            <person name="Birren B."/>
            <person name="Berg H.C."/>
            <person name="Church G.M."/>
        </authorList>
    </citation>
    <scope>NUCLEOTIDE SEQUENCE [LARGE SCALE GENOMIC DNA]</scope>
    <source>
        <strain>ATCC 43663 / NCTC 11711 / 163 K</strain>
    </source>
</reference>
<feature type="chain" id="PRO_0000170565" description="Guanylate kinase">
    <location>
        <begin position="1"/>
        <end position="201"/>
    </location>
</feature>
<feature type="domain" description="Guanylate kinase-like" evidence="1">
    <location>
        <begin position="10"/>
        <end position="195"/>
    </location>
</feature>
<feature type="binding site" evidence="1">
    <location>
        <begin position="17"/>
        <end position="24"/>
    </location>
    <ligand>
        <name>ATP</name>
        <dbReference type="ChEBI" id="CHEBI:30616"/>
    </ligand>
</feature>
<evidence type="ECO:0000255" key="1">
    <source>
        <dbReference type="HAMAP-Rule" id="MF_00328"/>
    </source>
</evidence>
<dbReference type="EC" id="2.7.4.8" evidence="1"/>
<dbReference type="EMBL" id="AE017308">
    <property type="protein sequence ID" value="AAT28043.1"/>
    <property type="molecule type" value="Genomic_DNA"/>
</dbReference>
<dbReference type="RefSeq" id="WP_011265077.1">
    <property type="nucleotide sequence ID" value="NC_006908.1"/>
</dbReference>
<dbReference type="SMR" id="Q6KH87"/>
<dbReference type="STRING" id="267748.MMOB5570"/>
<dbReference type="KEGG" id="mmo:MMOB5570"/>
<dbReference type="eggNOG" id="COG0194">
    <property type="taxonomic scope" value="Bacteria"/>
</dbReference>
<dbReference type="HOGENOM" id="CLU_001715_1_1_14"/>
<dbReference type="OrthoDB" id="9808150at2"/>
<dbReference type="Proteomes" id="UP000009072">
    <property type="component" value="Chromosome"/>
</dbReference>
<dbReference type="GO" id="GO:0005829">
    <property type="term" value="C:cytosol"/>
    <property type="evidence" value="ECO:0007669"/>
    <property type="project" value="TreeGrafter"/>
</dbReference>
<dbReference type="GO" id="GO:0005524">
    <property type="term" value="F:ATP binding"/>
    <property type="evidence" value="ECO:0007669"/>
    <property type="project" value="UniProtKB-UniRule"/>
</dbReference>
<dbReference type="GO" id="GO:0004385">
    <property type="term" value="F:guanylate kinase activity"/>
    <property type="evidence" value="ECO:0007669"/>
    <property type="project" value="UniProtKB-UniRule"/>
</dbReference>
<dbReference type="CDD" id="cd00071">
    <property type="entry name" value="GMPK"/>
    <property type="match status" value="1"/>
</dbReference>
<dbReference type="FunFam" id="3.30.63.10:FF:000002">
    <property type="entry name" value="Guanylate kinase 1"/>
    <property type="match status" value="1"/>
</dbReference>
<dbReference type="Gene3D" id="3.30.63.10">
    <property type="entry name" value="Guanylate Kinase phosphate binding domain"/>
    <property type="match status" value="1"/>
</dbReference>
<dbReference type="Gene3D" id="3.40.50.300">
    <property type="entry name" value="P-loop containing nucleotide triphosphate hydrolases"/>
    <property type="match status" value="1"/>
</dbReference>
<dbReference type="HAMAP" id="MF_00328">
    <property type="entry name" value="Guanylate_kinase"/>
    <property type="match status" value="1"/>
</dbReference>
<dbReference type="InterPro" id="IPR008145">
    <property type="entry name" value="GK/Ca_channel_bsu"/>
</dbReference>
<dbReference type="InterPro" id="IPR008144">
    <property type="entry name" value="Guanylate_kin-like_dom"/>
</dbReference>
<dbReference type="InterPro" id="IPR017665">
    <property type="entry name" value="Guanylate_kinase"/>
</dbReference>
<dbReference type="InterPro" id="IPR020590">
    <property type="entry name" value="Guanylate_kinase_CS"/>
</dbReference>
<dbReference type="InterPro" id="IPR027417">
    <property type="entry name" value="P-loop_NTPase"/>
</dbReference>
<dbReference type="NCBIfam" id="TIGR03263">
    <property type="entry name" value="guanyl_kin"/>
    <property type="match status" value="1"/>
</dbReference>
<dbReference type="PANTHER" id="PTHR23117:SF13">
    <property type="entry name" value="GUANYLATE KINASE"/>
    <property type="match status" value="1"/>
</dbReference>
<dbReference type="PANTHER" id="PTHR23117">
    <property type="entry name" value="GUANYLATE KINASE-RELATED"/>
    <property type="match status" value="1"/>
</dbReference>
<dbReference type="Pfam" id="PF00625">
    <property type="entry name" value="Guanylate_kin"/>
    <property type="match status" value="1"/>
</dbReference>
<dbReference type="SMART" id="SM00072">
    <property type="entry name" value="GuKc"/>
    <property type="match status" value="1"/>
</dbReference>
<dbReference type="SUPFAM" id="SSF52540">
    <property type="entry name" value="P-loop containing nucleoside triphosphate hydrolases"/>
    <property type="match status" value="1"/>
</dbReference>
<dbReference type="PROSITE" id="PS00856">
    <property type="entry name" value="GUANYLATE_KINASE_1"/>
    <property type="match status" value="1"/>
</dbReference>
<dbReference type="PROSITE" id="PS50052">
    <property type="entry name" value="GUANYLATE_KINASE_2"/>
    <property type="match status" value="1"/>
</dbReference>
<protein>
    <recommendedName>
        <fullName evidence="1">Guanylate kinase</fullName>
        <ecNumber evidence="1">2.7.4.8</ecNumber>
    </recommendedName>
    <alternativeName>
        <fullName evidence="1">GMP kinase</fullName>
    </alternativeName>
</protein>
<organism>
    <name type="scientific">Mycoplasma mobile (strain ATCC 43663 / 163K / NCTC 11711)</name>
    <name type="common">Mesomycoplasma mobile</name>
    <dbReference type="NCBI Taxonomy" id="267748"/>
    <lineage>
        <taxon>Bacteria</taxon>
        <taxon>Bacillati</taxon>
        <taxon>Mycoplasmatota</taxon>
        <taxon>Mycoplasmoidales</taxon>
        <taxon>Metamycoplasmataceae</taxon>
        <taxon>Mesomycoplasma</taxon>
    </lineage>
</organism>
<name>KGUA_MYCM1</name>
<keyword id="KW-0067">ATP-binding</keyword>
<keyword id="KW-0963">Cytoplasm</keyword>
<keyword id="KW-0418">Kinase</keyword>
<keyword id="KW-0547">Nucleotide-binding</keyword>
<keyword id="KW-1185">Reference proteome</keyword>
<keyword id="KW-0808">Transferase</keyword>
<sequence>MCIILIMHHGKIIILSGPSGVGKGSIEKLLLEDEKLKLKFSTSVTSRKPRVNEIEGKDYFFRSEEEFSELIKEKKFIEWSRHLNNYYGTLKSEVDKILGAKFNVLIEIETTGALNILKYYKKKNMLNDVISIFILPPRLEELETRILNRGSETKEEIKIRIKKAKKEIKLKNKFKYNLTNNFLHECVEEVKNILKREIHEI</sequence>
<comment type="function">
    <text evidence="1">Essential for recycling GMP and indirectly, cGMP.</text>
</comment>
<comment type="catalytic activity">
    <reaction evidence="1">
        <text>GMP + ATP = GDP + ADP</text>
        <dbReference type="Rhea" id="RHEA:20780"/>
        <dbReference type="ChEBI" id="CHEBI:30616"/>
        <dbReference type="ChEBI" id="CHEBI:58115"/>
        <dbReference type="ChEBI" id="CHEBI:58189"/>
        <dbReference type="ChEBI" id="CHEBI:456216"/>
        <dbReference type="EC" id="2.7.4.8"/>
    </reaction>
</comment>
<comment type="subcellular location">
    <subcellularLocation>
        <location evidence="1">Cytoplasm</location>
    </subcellularLocation>
</comment>
<comment type="similarity">
    <text evidence="1">Belongs to the guanylate kinase family.</text>
</comment>
<accession>Q6KH87</accession>
<gene>
    <name evidence="1" type="primary">gmk</name>
    <name type="ordered locus">MMOB5570</name>
</gene>